<gene>
    <name evidence="1" type="primary">gcvT</name>
    <name type="ordered locus">BH2816</name>
</gene>
<feature type="chain" id="PRO_0000122540" description="Aminomethyltransferase">
    <location>
        <begin position="1"/>
        <end position="365"/>
    </location>
</feature>
<accession>Q9K934</accession>
<keyword id="KW-0032">Aminotransferase</keyword>
<keyword id="KW-1185">Reference proteome</keyword>
<keyword id="KW-0808">Transferase</keyword>
<sequence>MTELKKTPLFDLYEQYGGKVIDFGGWALPVQFSSIKEEHEAVRTKAGLFDVSHMGEVEVTGAQALNYLQRLVTNDVSKIKDGQAQYTAMCYENGGTVDDLLIYRRSEDQYLLVINAANIDKDIAWMEKHAIDGVSITNVSNQTAQLALQGPVAENVLQTLTEEPLADIKFFRFVDGVNIAGVNVLLSRTGYTGEDGFELYCLAEDAPVLWKKLIEAGKEHGVVPCGLGARDTLRFEAKLPLYGQELTKDISPIEAGIGFAVKVDKEDFIGKEILKKQKEQGAPRKLVGLEMVDKGIPRTGYEVYVDNQKIGFVTTGTQSPTLKKNVGLALLQAEHSELGTEVIVHVRKRQLIAKVVATPFYKRGN</sequence>
<comment type="function">
    <text evidence="1">The glycine cleavage system catalyzes the degradation of glycine.</text>
</comment>
<comment type="catalytic activity">
    <reaction evidence="1">
        <text>N(6)-[(R)-S(8)-aminomethyldihydrolipoyl]-L-lysyl-[protein] + (6S)-5,6,7,8-tetrahydrofolate = N(6)-[(R)-dihydrolipoyl]-L-lysyl-[protein] + (6R)-5,10-methylene-5,6,7,8-tetrahydrofolate + NH4(+)</text>
        <dbReference type="Rhea" id="RHEA:16945"/>
        <dbReference type="Rhea" id="RHEA-COMP:10475"/>
        <dbReference type="Rhea" id="RHEA-COMP:10492"/>
        <dbReference type="ChEBI" id="CHEBI:15636"/>
        <dbReference type="ChEBI" id="CHEBI:28938"/>
        <dbReference type="ChEBI" id="CHEBI:57453"/>
        <dbReference type="ChEBI" id="CHEBI:83100"/>
        <dbReference type="ChEBI" id="CHEBI:83143"/>
        <dbReference type="EC" id="2.1.2.10"/>
    </reaction>
</comment>
<comment type="subunit">
    <text evidence="1">The glycine cleavage system is composed of four proteins: P, T, L and H.</text>
</comment>
<comment type="similarity">
    <text evidence="1">Belongs to the GcvT family.</text>
</comment>
<dbReference type="EC" id="2.1.2.10" evidence="1"/>
<dbReference type="EMBL" id="BA000004">
    <property type="protein sequence ID" value="BAB06535.1"/>
    <property type="molecule type" value="Genomic_DNA"/>
</dbReference>
<dbReference type="PIR" id="H84001">
    <property type="entry name" value="H84001"/>
</dbReference>
<dbReference type="RefSeq" id="WP_010898964.1">
    <property type="nucleotide sequence ID" value="NC_002570.2"/>
</dbReference>
<dbReference type="SMR" id="Q9K934"/>
<dbReference type="STRING" id="272558.gene:10728716"/>
<dbReference type="KEGG" id="bha:BH2816"/>
<dbReference type="eggNOG" id="COG0404">
    <property type="taxonomic scope" value="Bacteria"/>
</dbReference>
<dbReference type="HOGENOM" id="CLU_007884_10_2_9"/>
<dbReference type="OrthoDB" id="9774591at2"/>
<dbReference type="Proteomes" id="UP000001258">
    <property type="component" value="Chromosome"/>
</dbReference>
<dbReference type="GO" id="GO:0005829">
    <property type="term" value="C:cytosol"/>
    <property type="evidence" value="ECO:0007669"/>
    <property type="project" value="TreeGrafter"/>
</dbReference>
<dbReference type="GO" id="GO:0005960">
    <property type="term" value="C:glycine cleavage complex"/>
    <property type="evidence" value="ECO:0007669"/>
    <property type="project" value="InterPro"/>
</dbReference>
<dbReference type="GO" id="GO:0004047">
    <property type="term" value="F:aminomethyltransferase activity"/>
    <property type="evidence" value="ECO:0007669"/>
    <property type="project" value="UniProtKB-UniRule"/>
</dbReference>
<dbReference type="GO" id="GO:0008483">
    <property type="term" value="F:transaminase activity"/>
    <property type="evidence" value="ECO:0007669"/>
    <property type="project" value="UniProtKB-KW"/>
</dbReference>
<dbReference type="GO" id="GO:0019464">
    <property type="term" value="P:glycine decarboxylation via glycine cleavage system"/>
    <property type="evidence" value="ECO:0007669"/>
    <property type="project" value="UniProtKB-UniRule"/>
</dbReference>
<dbReference type="FunFam" id="2.40.30.110:FF:000003">
    <property type="entry name" value="Aminomethyltransferase"/>
    <property type="match status" value="1"/>
</dbReference>
<dbReference type="FunFam" id="3.30.70.1400:FF:000001">
    <property type="entry name" value="Aminomethyltransferase"/>
    <property type="match status" value="1"/>
</dbReference>
<dbReference type="FunFam" id="4.10.1250.10:FF:000001">
    <property type="entry name" value="Aminomethyltransferase"/>
    <property type="match status" value="1"/>
</dbReference>
<dbReference type="Gene3D" id="2.40.30.110">
    <property type="entry name" value="Aminomethyltransferase beta-barrel domains"/>
    <property type="match status" value="1"/>
</dbReference>
<dbReference type="Gene3D" id="3.30.70.1400">
    <property type="entry name" value="Aminomethyltransferase beta-barrel domains"/>
    <property type="match status" value="1"/>
</dbReference>
<dbReference type="Gene3D" id="4.10.1250.10">
    <property type="entry name" value="Aminomethyltransferase fragment"/>
    <property type="match status" value="1"/>
</dbReference>
<dbReference type="Gene3D" id="3.30.1360.120">
    <property type="entry name" value="Probable tRNA modification gtpase trme, domain 1"/>
    <property type="match status" value="1"/>
</dbReference>
<dbReference type="HAMAP" id="MF_00259">
    <property type="entry name" value="GcvT"/>
    <property type="match status" value="1"/>
</dbReference>
<dbReference type="InterPro" id="IPR006223">
    <property type="entry name" value="GCS_T"/>
</dbReference>
<dbReference type="InterPro" id="IPR022903">
    <property type="entry name" value="GCS_T_bac"/>
</dbReference>
<dbReference type="InterPro" id="IPR013977">
    <property type="entry name" value="GCST_C"/>
</dbReference>
<dbReference type="InterPro" id="IPR006222">
    <property type="entry name" value="GCV_T_N"/>
</dbReference>
<dbReference type="InterPro" id="IPR028896">
    <property type="entry name" value="GcvT/YgfZ/DmdA"/>
</dbReference>
<dbReference type="InterPro" id="IPR029043">
    <property type="entry name" value="GcvT/YgfZ_C"/>
</dbReference>
<dbReference type="InterPro" id="IPR027266">
    <property type="entry name" value="TrmE/GcvT_dom1"/>
</dbReference>
<dbReference type="NCBIfam" id="TIGR00528">
    <property type="entry name" value="gcvT"/>
    <property type="match status" value="1"/>
</dbReference>
<dbReference type="NCBIfam" id="NF001567">
    <property type="entry name" value="PRK00389.1"/>
    <property type="match status" value="1"/>
</dbReference>
<dbReference type="PANTHER" id="PTHR43757">
    <property type="entry name" value="AMINOMETHYLTRANSFERASE"/>
    <property type="match status" value="1"/>
</dbReference>
<dbReference type="PANTHER" id="PTHR43757:SF2">
    <property type="entry name" value="AMINOMETHYLTRANSFERASE, MITOCHONDRIAL"/>
    <property type="match status" value="1"/>
</dbReference>
<dbReference type="Pfam" id="PF01571">
    <property type="entry name" value="GCV_T"/>
    <property type="match status" value="1"/>
</dbReference>
<dbReference type="Pfam" id="PF08669">
    <property type="entry name" value="GCV_T_C"/>
    <property type="match status" value="1"/>
</dbReference>
<dbReference type="PIRSF" id="PIRSF006487">
    <property type="entry name" value="GcvT"/>
    <property type="match status" value="1"/>
</dbReference>
<dbReference type="SUPFAM" id="SSF101790">
    <property type="entry name" value="Aminomethyltransferase beta-barrel domain"/>
    <property type="match status" value="1"/>
</dbReference>
<dbReference type="SUPFAM" id="SSF103025">
    <property type="entry name" value="Folate-binding domain"/>
    <property type="match status" value="1"/>
</dbReference>
<reference key="1">
    <citation type="journal article" date="2000" name="Nucleic Acids Res.">
        <title>Complete genome sequence of the alkaliphilic bacterium Bacillus halodurans and genomic sequence comparison with Bacillus subtilis.</title>
        <authorList>
            <person name="Takami H."/>
            <person name="Nakasone K."/>
            <person name="Takaki Y."/>
            <person name="Maeno G."/>
            <person name="Sasaki R."/>
            <person name="Masui N."/>
            <person name="Fuji F."/>
            <person name="Hirama C."/>
            <person name="Nakamura Y."/>
            <person name="Ogasawara N."/>
            <person name="Kuhara S."/>
            <person name="Horikoshi K."/>
        </authorList>
    </citation>
    <scope>NUCLEOTIDE SEQUENCE [LARGE SCALE GENOMIC DNA]</scope>
    <source>
        <strain>ATCC BAA-125 / DSM 18197 / FERM 7344 / JCM 9153 / C-125</strain>
    </source>
</reference>
<evidence type="ECO:0000255" key="1">
    <source>
        <dbReference type="HAMAP-Rule" id="MF_00259"/>
    </source>
</evidence>
<protein>
    <recommendedName>
        <fullName evidence="1">Aminomethyltransferase</fullName>
        <ecNumber evidence="1">2.1.2.10</ecNumber>
    </recommendedName>
    <alternativeName>
        <fullName evidence="1">Glycine cleavage system T protein</fullName>
    </alternativeName>
</protein>
<proteinExistence type="inferred from homology"/>
<name>GCST_HALH5</name>
<organism>
    <name type="scientific">Halalkalibacterium halodurans (strain ATCC BAA-125 / DSM 18197 / FERM 7344 / JCM 9153 / C-125)</name>
    <name type="common">Bacillus halodurans</name>
    <dbReference type="NCBI Taxonomy" id="272558"/>
    <lineage>
        <taxon>Bacteria</taxon>
        <taxon>Bacillati</taxon>
        <taxon>Bacillota</taxon>
        <taxon>Bacilli</taxon>
        <taxon>Bacillales</taxon>
        <taxon>Bacillaceae</taxon>
        <taxon>Halalkalibacterium (ex Joshi et al. 2022)</taxon>
    </lineage>
</organism>